<proteinExistence type="evidence at transcript level"/>
<reference key="1">
    <citation type="journal article" date="1990" name="Plant Mol. Biol.">
        <title>Characterization of a novel nodulin gene in soybean that shares sequence similarity to the gene for nodulin-24.</title>
        <authorList>
            <person name="Nirunsuksiri W."/>
            <person name="Sengupta-Gopalan C."/>
        </authorList>
    </citation>
    <scope>NUCLEOTIDE SEQUENCE [GENOMIC DNA]</scope>
    <source>
        <strain>cv. Prize</strain>
    </source>
</reference>
<gene>
    <name type="primary">GMN16</name>
</gene>
<keyword id="KW-0472">Membrane</keyword>
<keyword id="KW-0536">Nodulation</keyword>
<keyword id="KW-1185">Reference proteome</keyword>
<keyword id="KW-0732">Signal</keyword>
<sequence>MGSKMAIVIVALFAMLLFISPEVACRNFKEELGEVVKETNEESDARLAGSSGGDLDKSYCPVHLPLMEYRKWIGNCRCGCCQWTTEPEVCLYCCPESHVPDLPSRPRAY</sequence>
<evidence type="ECO:0000255" key="1"/>
<evidence type="ECO:0000305" key="2"/>
<feature type="signal peptide" evidence="1">
    <location>
        <begin position="1"/>
        <end position="25"/>
    </location>
</feature>
<feature type="chain" id="PRO_0000019796" description="Nodulin-16">
    <location>
        <begin position="26"/>
        <end position="109"/>
    </location>
</feature>
<comment type="subcellular location">
    <subcellularLocation>
        <location evidence="2">Symbiosome</location>
        <location evidence="2">Peribacteroid membrane</location>
    </subcellularLocation>
</comment>
<comment type="induction">
    <text>During nodulation in legume roots after Rhizobium infection.</text>
</comment>
<comment type="similarity">
    <text evidence="2">Belongs to the GRP family.</text>
</comment>
<protein>
    <recommendedName>
        <fullName>Nodulin-16</fullName>
        <shortName>N-16</shortName>
    </recommendedName>
</protein>
<dbReference type="EMBL" id="X54307">
    <property type="protein sequence ID" value="CAA38204.1"/>
    <property type="molecule type" value="Genomic_DNA"/>
</dbReference>
<dbReference type="PIR" id="S12403">
    <property type="entry name" value="S12403"/>
</dbReference>
<dbReference type="RefSeq" id="XP_006574373.1">
    <property type="nucleotide sequence ID" value="XM_006574310.2"/>
</dbReference>
<dbReference type="PaxDb" id="3847-GLYMA02G43320.1"/>
<dbReference type="EnsemblPlants" id="KRH73298">
    <property type="protein sequence ID" value="KRH73298"/>
    <property type="gene ID" value="GLYMA_02G265200"/>
</dbReference>
<dbReference type="GeneID" id="100527599"/>
<dbReference type="Gramene" id="KRH73298">
    <property type="protein sequence ID" value="KRH73298"/>
    <property type="gene ID" value="GLYMA_02G265200"/>
</dbReference>
<dbReference type="HOGENOM" id="CLU_2403909_0_0_1"/>
<dbReference type="InParanoid" id="P23233"/>
<dbReference type="OrthoDB" id="1436654at2759"/>
<dbReference type="Proteomes" id="UP000008827">
    <property type="component" value="Chromosome 2"/>
</dbReference>
<dbReference type="GO" id="GO:0043661">
    <property type="term" value="C:peribacteroid membrane"/>
    <property type="evidence" value="ECO:0007669"/>
    <property type="project" value="UniProtKB-SubCell"/>
</dbReference>
<dbReference type="GO" id="GO:0009877">
    <property type="term" value="P:nodulation"/>
    <property type="evidence" value="ECO:0007669"/>
    <property type="project" value="UniProtKB-KW"/>
</dbReference>
<name>NO16_SOYBN</name>
<accession>P23233</accession>
<organism>
    <name type="scientific">Glycine max</name>
    <name type="common">Soybean</name>
    <name type="synonym">Glycine hispida</name>
    <dbReference type="NCBI Taxonomy" id="3847"/>
    <lineage>
        <taxon>Eukaryota</taxon>
        <taxon>Viridiplantae</taxon>
        <taxon>Streptophyta</taxon>
        <taxon>Embryophyta</taxon>
        <taxon>Tracheophyta</taxon>
        <taxon>Spermatophyta</taxon>
        <taxon>Magnoliopsida</taxon>
        <taxon>eudicotyledons</taxon>
        <taxon>Gunneridae</taxon>
        <taxon>Pentapetalae</taxon>
        <taxon>rosids</taxon>
        <taxon>fabids</taxon>
        <taxon>Fabales</taxon>
        <taxon>Fabaceae</taxon>
        <taxon>Papilionoideae</taxon>
        <taxon>50 kb inversion clade</taxon>
        <taxon>NPAAA clade</taxon>
        <taxon>indigoferoid/millettioid clade</taxon>
        <taxon>Phaseoleae</taxon>
        <taxon>Glycine</taxon>
        <taxon>Glycine subgen. Soja</taxon>
    </lineage>
</organism>